<dbReference type="EC" id="3.4.24.-"/>
<dbReference type="EMBL" id="HQ731069">
    <property type="protein sequence ID" value="ADV71355.1"/>
    <property type="molecule type" value="mRNA"/>
</dbReference>
<dbReference type="SMR" id="E9NW26"/>
<dbReference type="MEROPS" id="M12.326"/>
<dbReference type="GO" id="GO:0005576">
    <property type="term" value="C:extracellular region"/>
    <property type="evidence" value="ECO:0007669"/>
    <property type="project" value="UniProtKB-SubCell"/>
</dbReference>
<dbReference type="GO" id="GO:0005886">
    <property type="term" value="C:plasma membrane"/>
    <property type="evidence" value="ECO:0007669"/>
    <property type="project" value="TreeGrafter"/>
</dbReference>
<dbReference type="GO" id="GO:0046872">
    <property type="term" value="F:metal ion binding"/>
    <property type="evidence" value="ECO:0007669"/>
    <property type="project" value="UniProtKB-KW"/>
</dbReference>
<dbReference type="GO" id="GO:0004222">
    <property type="term" value="F:metalloendopeptidase activity"/>
    <property type="evidence" value="ECO:0007669"/>
    <property type="project" value="InterPro"/>
</dbReference>
<dbReference type="GO" id="GO:0090729">
    <property type="term" value="F:toxin activity"/>
    <property type="evidence" value="ECO:0007669"/>
    <property type="project" value="UniProtKB-KW"/>
</dbReference>
<dbReference type="GO" id="GO:0006508">
    <property type="term" value="P:proteolysis"/>
    <property type="evidence" value="ECO:0007669"/>
    <property type="project" value="UniProtKB-KW"/>
</dbReference>
<dbReference type="CDD" id="cd04269">
    <property type="entry name" value="ZnMc_adamalysin_II_like"/>
    <property type="match status" value="1"/>
</dbReference>
<dbReference type="FunFam" id="3.40.390.10:FF:000002">
    <property type="entry name" value="Disintegrin and metalloproteinase domain-containing protein 22"/>
    <property type="match status" value="1"/>
</dbReference>
<dbReference type="FunFam" id="4.10.70.10:FF:000005">
    <property type="entry name" value="Zinc metalloproteinase/disintegrin"/>
    <property type="match status" value="1"/>
</dbReference>
<dbReference type="Gene3D" id="3.40.390.10">
    <property type="entry name" value="Collagenase (Catalytic Domain)"/>
    <property type="match status" value="1"/>
</dbReference>
<dbReference type="Gene3D" id="4.10.70.10">
    <property type="entry name" value="Disintegrin domain"/>
    <property type="match status" value="1"/>
</dbReference>
<dbReference type="InterPro" id="IPR018358">
    <property type="entry name" value="Disintegrin_CS"/>
</dbReference>
<dbReference type="InterPro" id="IPR001762">
    <property type="entry name" value="Disintegrin_dom"/>
</dbReference>
<dbReference type="InterPro" id="IPR036436">
    <property type="entry name" value="Disintegrin_dom_sf"/>
</dbReference>
<dbReference type="InterPro" id="IPR024079">
    <property type="entry name" value="MetalloPept_cat_dom_sf"/>
</dbReference>
<dbReference type="InterPro" id="IPR001590">
    <property type="entry name" value="Peptidase_M12B"/>
</dbReference>
<dbReference type="InterPro" id="IPR002870">
    <property type="entry name" value="Peptidase_M12B_N"/>
</dbReference>
<dbReference type="InterPro" id="IPR034027">
    <property type="entry name" value="Reprolysin_adamalysin"/>
</dbReference>
<dbReference type="PANTHER" id="PTHR11905">
    <property type="entry name" value="ADAM A DISINTEGRIN AND METALLOPROTEASE DOMAIN"/>
    <property type="match status" value="1"/>
</dbReference>
<dbReference type="PANTHER" id="PTHR11905:SF32">
    <property type="entry name" value="DISINTEGRIN AND METALLOPROTEINASE DOMAIN-CONTAINING PROTEIN 28"/>
    <property type="match status" value="1"/>
</dbReference>
<dbReference type="Pfam" id="PF00200">
    <property type="entry name" value="Disintegrin"/>
    <property type="match status" value="1"/>
</dbReference>
<dbReference type="Pfam" id="PF01562">
    <property type="entry name" value="Pep_M12B_propep"/>
    <property type="match status" value="1"/>
</dbReference>
<dbReference type="Pfam" id="PF01421">
    <property type="entry name" value="Reprolysin"/>
    <property type="match status" value="1"/>
</dbReference>
<dbReference type="PRINTS" id="PR00289">
    <property type="entry name" value="DISINTEGRIN"/>
</dbReference>
<dbReference type="SMART" id="SM00050">
    <property type="entry name" value="DISIN"/>
    <property type="match status" value="1"/>
</dbReference>
<dbReference type="SUPFAM" id="SSF57552">
    <property type="entry name" value="Blood coagulation inhibitor (disintegrin)"/>
    <property type="match status" value="1"/>
</dbReference>
<dbReference type="SUPFAM" id="SSF55486">
    <property type="entry name" value="Metalloproteases ('zincins'), catalytic domain"/>
    <property type="match status" value="1"/>
</dbReference>
<dbReference type="PROSITE" id="PS50215">
    <property type="entry name" value="ADAM_MEPRO"/>
    <property type="match status" value="1"/>
</dbReference>
<dbReference type="PROSITE" id="PS00427">
    <property type="entry name" value="DISINTEGRIN_1"/>
    <property type="match status" value="1"/>
</dbReference>
<dbReference type="PROSITE" id="PS50214">
    <property type="entry name" value="DISINTEGRIN_2"/>
    <property type="match status" value="1"/>
</dbReference>
<dbReference type="PROSITE" id="PS00142">
    <property type="entry name" value="ZINC_PROTEASE"/>
    <property type="match status" value="1"/>
</dbReference>
<evidence type="ECO:0000250" key="1"/>
<evidence type="ECO:0000250" key="2">
    <source>
        <dbReference type="UniProtKB" id="P18619"/>
    </source>
</evidence>
<evidence type="ECO:0000255" key="3"/>
<evidence type="ECO:0000255" key="4">
    <source>
        <dbReference type="PROSITE-ProRule" id="PRU00068"/>
    </source>
</evidence>
<evidence type="ECO:0000255" key="5">
    <source>
        <dbReference type="PROSITE-ProRule" id="PRU00276"/>
    </source>
</evidence>
<evidence type="ECO:0000305" key="6"/>
<comment type="function">
    <molecule>Snake venom metalloproteinase</molecule>
    <text evidence="1">Impairs hemostasis in the envenomed animal.</text>
</comment>
<comment type="function">
    <molecule>Disintegrin</molecule>
    <text evidence="1">Inhibits platelet aggregation.</text>
</comment>
<comment type="cofactor">
    <cofactor evidence="6">
        <name>Zn(2+)</name>
        <dbReference type="ChEBI" id="CHEBI:29105"/>
    </cofactor>
    <text evidence="6">Binds 1 zinc ion per subunit.</text>
</comment>
<comment type="subunit">
    <text evidence="1">Monomer.</text>
</comment>
<comment type="subcellular location">
    <subcellularLocation>
        <location evidence="1">Secreted</location>
    </subcellularLocation>
</comment>
<comment type="tissue specificity">
    <text>Expressed by the venom gland.</text>
</comment>
<comment type="miscellaneous">
    <text>The disintegrin belongs to the medium disintegrin subfamily.</text>
</comment>
<comment type="similarity">
    <text evidence="6">Belongs to the venom metalloproteinase (M12B) family. P-II subfamily. P-IIa sub-subfamily.</text>
</comment>
<reference key="1">
    <citation type="submission" date="2010-12" db="EMBL/GenBank/DDBJ databases">
        <title>Purification, characterization and cloning of metalloproteinases from Trimeresurus mucrosquamatus Venom.</title>
        <authorList>
            <person name="Sun Q.Y."/>
            <person name="Bao J."/>
        </authorList>
    </citation>
    <scope>NUCLEOTIDE SEQUENCE [MRNA]</scope>
    <source>
        <tissue>Venom gland</tissue>
    </source>
</reference>
<feature type="signal peptide" evidence="3">
    <location>
        <begin position="1"/>
        <end position="20"/>
    </location>
</feature>
<feature type="propeptide" id="PRO_0000417626" evidence="1">
    <location>
        <begin position="21"/>
        <end position="188"/>
    </location>
</feature>
<feature type="chain" id="PRO_0000417627" description="Snake venom metalloproteinase" evidence="1">
    <location>
        <begin position="189"/>
        <end position="390"/>
    </location>
</feature>
<feature type="propeptide" id="PRO_0000424724" evidence="1">
    <location>
        <begin position="391"/>
        <end position="408"/>
    </location>
</feature>
<feature type="chain" id="PRO_0000417628" description="Disintegrin" evidence="1">
    <location>
        <begin position="409"/>
        <end position="479"/>
    </location>
</feature>
<feature type="domain" description="Peptidase M12B" evidence="5">
    <location>
        <begin position="194"/>
        <end position="390"/>
    </location>
</feature>
<feature type="domain" description="Disintegrin" evidence="4">
    <location>
        <begin position="398"/>
        <end position="479"/>
    </location>
</feature>
<feature type="short sequence motif" description="Cell attachment site">
    <location>
        <begin position="457"/>
        <end position="459"/>
    </location>
</feature>
<feature type="active site" evidence="5">
    <location>
        <position position="331"/>
    </location>
</feature>
<feature type="binding site" evidence="5">
    <location>
        <position position="330"/>
    </location>
    <ligand>
        <name>Zn(2+)</name>
        <dbReference type="ChEBI" id="CHEBI:29105"/>
        <note>catalytic</note>
    </ligand>
</feature>
<feature type="binding site" evidence="5">
    <location>
        <position position="334"/>
    </location>
    <ligand>
        <name>Zn(2+)</name>
        <dbReference type="ChEBI" id="CHEBI:29105"/>
        <note>catalytic</note>
    </ligand>
</feature>
<feature type="binding site" evidence="5">
    <location>
        <position position="339"/>
    </location>
    <ligand>
        <name>Zn(2+)</name>
        <dbReference type="ChEBI" id="CHEBI:29105"/>
        <note>catalytic</note>
    </ligand>
</feature>
<feature type="glycosylation site" description="N-linked (GlcNAc...) asparagine" evidence="3">
    <location>
        <position position="368"/>
    </location>
</feature>
<feature type="disulfide bond" evidence="5">
    <location>
        <begin position="305"/>
        <end position="385"/>
    </location>
</feature>
<feature type="disulfide bond" evidence="5">
    <location>
        <begin position="345"/>
        <end position="369"/>
    </location>
</feature>
<feature type="disulfide bond" evidence="5">
    <location>
        <begin position="347"/>
        <end position="352"/>
    </location>
</feature>
<feature type="disulfide bond" evidence="2">
    <location>
        <begin position="412"/>
        <end position="427"/>
    </location>
</feature>
<feature type="disulfide bond" evidence="2">
    <location>
        <begin position="414"/>
        <end position="422"/>
    </location>
</feature>
<feature type="disulfide bond" evidence="2">
    <location>
        <begin position="421"/>
        <end position="444"/>
    </location>
</feature>
<feature type="disulfide bond" evidence="2">
    <location>
        <begin position="435"/>
        <end position="441"/>
    </location>
</feature>
<feature type="disulfide bond" evidence="2">
    <location>
        <begin position="440"/>
        <end position="465"/>
    </location>
</feature>
<feature type="disulfide bond" evidence="2 4">
    <location>
        <begin position="453"/>
        <end position="472"/>
    </location>
</feature>
<keyword id="KW-1217">Cell adhesion impairing toxin</keyword>
<keyword id="KW-1015">Disulfide bond</keyword>
<keyword id="KW-0325">Glycoprotein</keyword>
<keyword id="KW-1199">Hemostasis impairing toxin</keyword>
<keyword id="KW-0378">Hydrolase</keyword>
<keyword id="KW-0479">Metal-binding</keyword>
<keyword id="KW-0482">Metalloprotease</keyword>
<keyword id="KW-1201">Platelet aggregation inhibiting toxin</keyword>
<keyword id="KW-0645">Protease</keyword>
<keyword id="KW-0964">Secreted</keyword>
<keyword id="KW-0732">Signal</keyword>
<keyword id="KW-0800">Toxin</keyword>
<keyword id="KW-0862">Zinc</keyword>
<keyword id="KW-0865">Zymogen</keyword>
<accession>E9NW26</accession>
<sequence length="479" mass="53446">MIQVLLVTICLAVFPYQGSSIILESGNVNDYEVVYPRKVTALPNRAVQPKYEDAMQYEFKVNGEPVVLHLEKNKGLFSKDYSETYYSPDGRKITTKPPVEDHCYYHGRIQNDADSTASISACNGLKGHFKLQGETHLIEPLKLSGSEAHAVFKYENVEKEDEAPKMCGVTETNWESYEPIKKASKLVVTAEPLRYVELVIVADHGMVTKYNGDLDKIREWVHEMVNTVDEIYDYMYIDVILADLEIWTNEDLINVQPSAHHTLDSFGEWRERDLLKRKSHDNAQLLTATDFDGPTIGLAHVASMCDPKRSTGVVQDHSTINLRVAVTLAHEMGHNLGIHHDKGSCSCGGYACIMSPVISHDPSKYFSNCSYIQCWDFIRKHNPQCILNKPLRTDTVSTPVSGNELLEAGEDCDCGSPSNPCCDVGTCKLSPGAQCADGLCCDQCRFKKKGTICRIARGDWNDDRCTGQSADCPRNGLYG</sequence>
<protein>
    <recommendedName>
        <fullName>Zinc metalloproteinase/disintegrin PMMP-1</fullName>
    </recommendedName>
    <component>
        <recommendedName>
            <fullName>Snake venom metalloproteinase</fullName>
            <shortName>SVMP</shortName>
            <ecNumber>3.4.24.-</ecNumber>
        </recommendedName>
    </component>
    <component>
        <recommendedName>
            <fullName>Disintegrin</fullName>
        </recommendedName>
    </component>
</protein>
<organism>
    <name type="scientific">Protobothrops mucrosquamatus</name>
    <name type="common">Taiwan habu</name>
    <name type="synonym">Trimeresurus mucrosquamatus</name>
    <dbReference type="NCBI Taxonomy" id="103944"/>
    <lineage>
        <taxon>Eukaryota</taxon>
        <taxon>Metazoa</taxon>
        <taxon>Chordata</taxon>
        <taxon>Craniata</taxon>
        <taxon>Vertebrata</taxon>
        <taxon>Euteleostomi</taxon>
        <taxon>Lepidosauria</taxon>
        <taxon>Squamata</taxon>
        <taxon>Bifurcata</taxon>
        <taxon>Unidentata</taxon>
        <taxon>Episquamata</taxon>
        <taxon>Toxicofera</taxon>
        <taxon>Serpentes</taxon>
        <taxon>Colubroidea</taxon>
        <taxon>Viperidae</taxon>
        <taxon>Crotalinae</taxon>
        <taxon>Protobothrops</taxon>
    </lineage>
</organism>
<name>VM2P1_PROMU</name>
<proteinExistence type="evidence at transcript level"/>